<feature type="chain" id="PRO_0000427065" description="Pup--protein ligase">
    <location>
        <begin position="1"/>
        <end position="452"/>
    </location>
</feature>
<feature type="active site" description="Proton acceptor" evidence="1">
    <location>
        <position position="57"/>
    </location>
</feature>
<feature type="binding site" evidence="1">
    <location>
        <position position="9"/>
    </location>
    <ligand>
        <name>Mg(2+)</name>
        <dbReference type="ChEBI" id="CHEBI:18420"/>
    </ligand>
</feature>
<feature type="binding site" evidence="1">
    <location>
        <position position="53"/>
    </location>
    <ligand>
        <name>ATP</name>
        <dbReference type="ChEBI" id="CHEBI:30616"/>
    </ligand>
</feature>
<feature type="binding site" evidence="1">
    <location>
        <position position="55"/>
    </location>
    <ligand>
        <name>Mg(2+)</name>
        <dbReference type="ChEBI" id="CHEBI:18420"/>
    </ligand>
</feature>
<feature type="binding site" evidence="1">
    <location>
        <position position="63"/>
    </location>
    <ligand>
        <name>Mg(2+)</name>
        <dbReference type="ChEBI" id="CHEBI:18420"/>
    </ligand>
</feature>
<feature type="binding site" evidence="1">
    <location>
        <position position="66"/>
    </location>
    <ligand>
        <name>ATP</name>
        <dbReference type="ChEBI" id="CHEBI:30616"/>
    </ligand>
</feature>
<feature type="binding site" evidence="1">
    <location>
        <position position="419"/>
    </location>
    <ligand>
        <name>ATP</name>
        <dbReference type="ChEBI" id="CHEBI:30616"/>
    </ligand>
</feature>
<accession>P9WNU6</accession>
<accession>A0A111</accession>
<accession>L0T8N5</accession>
<accession>P64943</accession>
<accession>Q10706</accession>
<keyword id="KW-0067">ATP-binding</keyword>
<keyword id="KW-0436">Ligase</keyword>
<keyword id="KW-0460">Magnesium</keyword>
<keyword id="KW-0479">Metal-binding</keyword>
<keyword id="KW-0547">Nucleotide-binding</keyword>
<keyword id="KW-1185">Reference proteome</keyword>
<keyword id="KW-0833">Ubl conjugation pathway</keyword>
<keyword id="KW-0843">Virulence</keyword>
<protein>
    <recommendedName>
        <fullName>Pup--protein ligase</fullName>
        <ecNumber>6.3.1.19</ecNumber>
    </recommendedName>
    <alternativeName>
        <fullName>Proteasome accessory factor A</fullName>
    </alternativeName>
    <alternativeName>
        <fullName>Pup-conjugating enzyme</fullName>
    </alternativeName>
</protein>
<proteinExistence type="inferred from homology"/>
<dbReference type="EC" id="6.3.1.19"/>
<dbReference type="EMBL" id="AE000516">
    <property type="protein sequence ID" value="AAK46439.1"/>
    <property type="molecule type" value="Genomic_DNA"/>
</dbReference>
<dbReference type="PIR" id="D70768">
    <property type="entry name" value="D70768"/>
</dbReference>
<dbReference type="RefSeq" id="WP_003410781.1">
    <property type="nucleotide sequence ID" value="NZ_KK341227.1"/>
</dbReference>
<dbReference type="SMR" id="P9WNU6"/>
<dbReference type="GeneID" id="45426074"/>
<dbReference type="KEGG" id="mtc:MT2158"/>
<dbReference type="PATRIC" id="fig|83331.31.peg.2327"/>
<dbReference type="HOGENOM" id="CLU_040524_0_1_11"/>
<dbReference type="UniPathway" id="UPA00997"/>
<dbReference type="UniPathway" id="UPA00998"/>
<dbReference type="Proteomes" id="UP000001020">
    <property type="component" value="Chromosome"/>
</dbReference>
<dbReference type="GO" id="GO:0005524">
    <property type="term" value="F:ATP binding"/>
    <property type="evidence" value="ECO:0007669"/>
    <property type="project" value="UniProtKB-UniRule"/>
</dbReference>
<dbReference type="GO" id="GO:0016879">
    <property type="term" value="F:ligase activity, forming carbon-nitrogen bonds"/>
    <property type="evidence" value="ECO:0007669"/>
    <property type="project" value="InterPro"/>
</dbReference>
<dbReference type="GO" id="GO:0000287">
    <property type="term" value="F:magnesium ion binding"/>
    <property type="evidence" value="ECO:0007669"/>
    <property type="project" value="UniProtKB-UniRule"/>
</dbReference>
<dbReference type="GO" id="GO:0019787">
    <property type="term" value="F:ubiquitin-like protein transferase activity"/>
    <property type="evidence" value="ECO:0007669"/>
    <property type="project" value="UniProtKB-UniRule"/>
</dbReference>
<dbReference type="GO" id="GO:0019941">
    <property type="term" value="P:modification-dependent protein catabolic process"/>
    <property type="evidence" value="ECO:0007669"/>
    <property type="project" value="UniProtKB-UniRule"/>
</dbReference>
<dbReference type="GO" id="GO:0010498">
    <property type="term" value="P:proteasomal protein catabolic process"/>
    <property type="evidence" value="ECO:0007669"/>
    <property type="project" value="UniProtKB-UniRule"/>
</dbReference>
<dbReference type="GO" id="GO:0070490">
    <property type="term" value="P:protein pupylation"/>
    <property type="evidence" value="ECO:0007669"/>
    <property type="project" value="UniProtKB-UniRule"/>
</dbReference>
<dbReference type="HAMAP" id="MF_02111">
    <property type="entry name" value="Pup_ligase"/>
    <property type="match status" value="1"/>
</dbReference>
<dbReference type="InterPro" id="IPR022279">
    <property type="entry name" value="Pup_ligase"/>
</dbReference>
<dbReference type="InterPro" id="IPR004347">
    <property type="entry name" value="Pup_ligase/deamidase"/>
</dbReference>
<dbReference type="NCBIfam" id="TIGR03686">
    <property type="entry name" value="pupylate_PafA"/>
    <property type="match status" value="1"/>
</dbReference>
<dbReference type="PANTHER" id="PTHR42307">
    <property type="entry name" value="PUP DEAMIDASE/DEPUPYLASE"/>
    <property type="match status" value="1"/>
</dbReference>
<dbReference type="PANTHER" id="PTHR42307:SF3">
    <property type="entry name" value="PUP--PROTEIN LIGASE"/>
    <property type="match status" value="1"/>
</dbReference>
<dbReference type="Pfam" id="PF03136">
    <property type="entry name" value="Pup_ligase"/>
    <property type="match status" value="1"/>
</dbReference>
<dbReference type="PIRSF" id="PIRSF018077">
    <property type="entry name" value="UCP018077"/>
    <property type="match status" value="1"/>
</dbReference>
<evidence type="ECO:0000250" key="1"/>
<evidence type="ECO:0000305" key="2"/>
<gene>
    <name type="primary">pafA</name>
    <name type="synonym">paf</name>
    <name type="ordered locus">MT2158</name>
</gene>
<organism>
    <name type="scientific">Mycobacterium tuberculosis (strain CDC 1551 / Oshkosh)</name>
    <dbReference type="NCBI Taxonomy" id="83331"/>
    <lineage>
        <taxon>Bacteria</taxon>
        <taxon>Bacillati</taxon>
        <taxon>Actinomycetota</taxon>
        <taxon>Actinomycetes</taxon>
        <taxon>Mycobacteriales</taxon>
        <taxon>Mycobacteriaceae</taxon>
        <taxon>Mycobacterium</taxon>
        <taxon>Mycobacterium tuberculosis complex</taxon>
    </lineage>
</organism>
<reference key="1">
    <citation type="journal article" date="2002" name="J. Bacteriol.">
        <title>Whole-genome comparison of Mycobacterium tuberculosis clinical and laboratory strains.</title>
        <authorList>
            <person name="Fleischmann R.D."/>
            <person name="Alland D."/>
            <person name="Eisen J.A."/>
            <person name="Carpenter L."/>
            <person name="White O."/>
            <person name="Peterson J.D."/>
            <person name="DeBoy R.T."/>
            <person name="Dodson R.J."/>
            <person name="Gwinn M.L."/>
            <person name="Haft D.H."/>
            <person name="Hickey E.K."/>
            <person name="Kolonay J.F."/>
            <person name="Nelson W.C."/>
            <person name="Umayam L.A."/>
            <person name="Ermolaeva M.D."/>
            <person name="Salzberg S.L."/>
            <person name="Delcher A."/>
            <person name="Utterback T.R."/>
            <person name="Weidman J.F."/>
            <person name="Khouri H.M."/>
            <person name="Gill J."/>
            <person name="Mikula A."/>
            <person name="Bishai W."/>
            <person name="Jacobs W.R. Jr."/>
            <person name="Venter J.C."/>
            <person name="Fraser C.M."/>
        </authorList>
    </citation>
    <scope>NUCLEOTIDE SEQUENCE [LARGE SCALE GENOMIC DNA]</scope>
    <source>
        <strain>CDC 1551 / Oshkosh</strain>
    </source>
</reference>
<sequence length="452" mass="51384">MQRRIMGIETEFGVTCTFHGHRRLSPDEVARYLFRRVVSWGRSSNVFLRNGARLYLDVGSHPEYATAECDSLVQLVTHDRAGEWVLEDLLVDAEQRLADEGIGGDIYLFKNNTDSAGNSYGCHENYLIVRAGEFSRISDVLLPFLVTRQLICGAGKVLQTPKAATYCLSQRAEHIWEGVSSATTRSRPIINTRDEPHADAEKYRRLHVIVGDSNMSETTTMLKVGTAALVLEMIESGVAFRDFSLDNPIRAIREVSHDVTGRRPVRLAGGRQASALDIQREYYTRAVEHLQTREPNAQIEQVVDLWGRQLDAVESQDFAKVDTEIDWVIKRKLFQRYQDRYDMELSHPKIAQLDLAYHDIKRGRGIFDLLQRKGLAARVTTDEEIAEAVDQPPQTTRARLRGEFISAAQEAGRDFTVDWVHLKLNDQAQRTVLCKDPFRAVDERVKRLIASM</sequence>
<name>PAFA_MYCTO</name>
<comment type="function">
    <text evidence="1">Catalyzes the covalent attachment of the prokaryotic ubiquitin-like protein modifier Pup to the proteasomal substrate proteins, thereby targeting them for proteasomal degradation. This tagging system is termed pupylation. The ligation reaction involves the side-chain carboxylate of the C-terminal glutamate of Pup and the side-chain amino group of a substrate lysine. PafA is required to confer resistance against the lethal effects of reactive nitrogen intermediates (RNI), antimicrobial molecules produced by activated macrophages and other cell types.</text>
</comment>
<comment type="catalytic activity">
    <reaction>
        <text>ATP + [prokaryotic ubiquitin-like protein]-L-glutamate + [protein]-L-lysine = ADP + phosphate + N(6)-([prokaryotic ubiquitin-like protein]-gamma-L-glutamyl)-[protein]-L-lysine.</text>
        <dbReference type="EC" id="6.3.1.19"/>
    </reaction>
</comment>
<comment type="pathway">
    <text>Protein degradation; proteasomal Pup-dependent pathway.</text>
</comment>
<comment type="pathway">
    <text>Protein modification; protein pupylation.</text>
</comment>
<comment type="subunit">
    <text evidence="1">Interacts with the prokaryotic ubiquitin-like protein Pup.</text>
</comment>
<comment type="similarity">
    <text evidence="2">Belongs to the Pup ligase/Pup deamidase family. Pup-conjugating enzyme subfamily.</text>
</comment>